<organism>
    <name type="scientific">Saccharomyces cerevisiae (strain ATCC 204508 / S288c)</name>
    <name type="common">Baker's yeast</name>
    <dbReference type="NCBI Taxonomy" id="559292"/>
    <lineage>
        <taxon>Eukaryota</taxon>
        <taxon>Fungi</taxon>
        <taxon>Dikarya</taxon>
        <taxon>Ascomycota</taxon>
        <taxon>Saccharomycotina</taxon>
        <taxon>Saccharomycetes</taxon>
        <taxon>Saccharomycetales</taxon>
        <taxon>Saccharomycetaceae</taxon>
        <taxon>Saccharomyces</taxon>
    </lineage>
</organism>
<comment type="miscellaneous">
    <text evidence="1">Completely overlaps TRP4.</text>
</comment>
<comment type="caution">
    <text evidence="2">Product of a dubious gene prediction unlikely to encode a functional protein. Because of that it is not part of the S.cerevisiae S288c complete/reference proteome set.</text>
</comment>
<sequence length="47" mass="5087">MNVLSGQSLGTVDELTLNMSQPKVPIRSPAPLLDVEALPPCLQIFRP</sequence>
<evidence type="ECO:0000305" key="1"/>
<evidence type="ECO:0000305" key="2">
    <source>
    </source>
</evidence>
<gene>
    <name type="ordered locus">YDR354C-A</name>
</gene>
<feature type="chain" id="PRO_0000299886" description="Putative uncharacterized protein YDR354C-A">
    <location>
        <begin position="1"/>
        <end position="47"/>
    </location>
</feature>
<proteinExistence type="uncertain"/>
<name>YD354_YEAST</name>
<reference key="1">
    <citation type="journal article" date="1997" name="Nature">
        <title>The nucleotide sequence of Saccharomyces cerevisiae chromosome IV.</title>
        <authorList>
            <person name="Jacq C."/>
            <person name="Alt-Moerbe J."/>
            <person name="Andre B."/>
            <person name="Arnold W."/>
            <person name="Bahr A."/>
            <person name="Ballesta J.P.G."/>
            <person name="Bargues M."/>
            <person name="Baron L."/>
            <person name="Becker A."/>
            <person name="Biteau N."/>
            <person name="Bloecker H."/>
            <person name="Blugeon C."/>
            <person name="Boskovic J."/>
            <person name="Brandt P."/>
            <person name="Brueckner M."/>
            <person name="Buitrago M.J."/>
            <person name="Coster F."/>
            <person name="Delaveau T."/>
            <person name="del Rey F."/>
            <person name="Dujon B."/>
            <person name="Eide L.G."/>
            <person name="Garcia-Cantalejo J.M."/>
            <person name="Goffeau A."/>
            <person name="Gomez-Peris A."/>
            <person name="Granotier C."/>
            <person name="Hanemann V."/>
            <person name="Hankeln T."/>
            <person name="Hoheisel J.D."/>
            <person name="Jaeger W."/>
            <person name="Jimenez A."/>
            <person name="Jonniaux J.-L."/>
            <person name="Kraemer C."/>
            <person name="Kuester H."/>
            <person name="Laamanen P."/>
            <person name="Legros Y."/>
            <person name="Louis E.J."/>
            <person name="Moeller-Rieker S."/>
            <person name="Monnet A."/>
            <person name="Moro M."/>
            <person name="Mueller-Auer S."/>
            <person name="Nussbaumer B."/>
            <person name="Paricio N."/>
            <person name="Paulin L."/>
            <person name="Perea J."/>
            <person name="Perez-Alonso M."/>
            <person name="Perez-Ortin J.E."/>
            <person name="Pohl T.M."/>
            <person name="Prydz H."/>
            <person name="Purnelle B."/>
            <person name="Rasmussen S.W."/>
            <person name="Remacha M.A."/>
            <person name="Revuelta J.L."/>
            <person name="Rieger M."/>
            <person name="Salom D."/>
            <person name="Saluz H.P."/>
            <person name="Saiz J.E."/>
            <person name="Saren A.-M."/>
            <person name="Schaefer M."/>
            <person name="Scharfe M."/>
            <person name="Schmidt E.R."/>
            <person name="Schneider C."/>
            <person name="Scholler P."/>
            <person name="Schwarz S."/>
            <person name="Soler-Mira A."/>
            <person name="Urrestarazu L.A."/>
            <person name="Verhasselt P."/>
            <person name="Vissers S."/>
            <person name="Voet M."/>
            <person name="Volckaert G."/>
            <person name="Wagner G."/>
            <person name="Wambutt R."/>
            <person name="Wedler E."/>
            <person name="Wedler H."/>
            <person name="Woelfl S."/>
            <person name="Harris D.E."/>
            <person name="Bowman S."/>
            <person name="Brown D."/>
            <person name="Churcher C.M."/>
            <person name="Connor R."/>
            <person name="Dedman K."/>
            <person name="Gentles S."/>
            <person name="Hamlin N."/>
            <person name="Hunt S."/>
            <person name="Jones L."/>
            <person name="McDonald S."/>
            <person name="Murphy L.D."/>
            <person name="Niblett D."/>
            <person name="Odell C."/>
            <person name="Oliver K."/>
            <person name="Rajandream M.A."/>
            <person name="Richards C."/>
            <person name="Shore L."/>
            <person name="Walsh S.V."/>
            <person name="Barrell B.G."/>
            <person name="Dietrich F.S."/>
            <person name="Mulligan J.T."/>
            <person name="Allen E."/>
            <person name="Araujo R."/>
            <person name="Aviles E."/>
            <person name="Berno A."/>
            <person name="Carpenter J."/>
            <person name="Chen E."/>
            <person name="Cherry J.M."/>
            <person name="Chung E."/>
            <person name="Duncan M."/>
            <person name="Hunicke-Smith S."/>
            <person name="Hyman R.W."/>
            <person name="Komp C."/>
            <person name="Lashkari D."/>
            <person name="Lew H."/>
            <person name="Lin D."/>
            <person name="Mosedale D."/>
            <person name="Nakahara K."/>
            <person name="Namath A."/>
            <person name="Oefner P."/>
            <person name="Oh C."/>
            <person name="Petel F.X."/>
            <person name="Roberts D."/>
            <person name="Schramm S."/>
            <person name="Schroeder M."/>
            <person name="Shogren T."/>
            <person name="Shroff N."/>
            <person name="Winant A."/>
            <person name="Yelton M.A."/>
            <person name="Botstein D."/>
            <person name="Davis R.W."/>
            <person name="Johnston M."/>
            <person name="Andrews S."/>
            <person name="Brinkman R."/>
            <person name="Cooper J."/>
            <person name="Ding H."/>
            <person name="Du Z."/>
            <person name="Favello A."/>
            <person name="Fulton L."/>
            <person name="Gattung S."/>
            <person name="Greco T."/>
            <person name="Hallsworth K."/>
            <person name="Hawkins J."/>
            <person name="Hillier L.W."/>
            <person name="Jier M."/>
            <person name="Johnson D."/>
            <person name="Johnston L."/>
            <person name="Kirsten J."/>
            <person name="Kucaba T."/>
            <person name="Langston Y."/>
            <person name="Latreille P."/>
            <person name="Le T."/>
            <person name="Mardis E."/>
            <person name="Menezes S."/>
            <person name="Miller N."/>
            <person name="Nhan M."/>
            <person name="Pauley A."/>
            <person name="Peluso D."/>
            <person name="Rifkin L."/>
            <person name="Riles L."/>
            <person name="Taich A."/>
            <person name="Trevaskis E."/>
            <person name="Vignati D."/>
            <person name="Wilcox L."/>
            <person name="Wohldman P."/>
            <person name="Vaudin M."/>
            <person name="Wilson R."/>
            <person name="Waterston R."/>
            <person name="Albermann K."/>
            <person name="Hani J."/>
            <person name="Heumann K."/>
            <person name="Kleine K."/>
            <person name="Mewes H.-W."/>
            <person name="Zollner A."/>
            <person name="Zaccaria P."/>
        </authorList>
    </citation>
    <scope>NUCLEOTIDE SEQUENCE [LARGE SCALE GENOMIC DNA]</scope>
    <source>
        <strain>ATCC 204508 / S288c</strain>
    </source>
</reference>
<reference key="2">
    <citation type="journal article" date="2014" name="G3 (Bethesda)">
        <title>The reference genome sequence of Saccharomyces cerevisiae: Then and now.</title>
        <authorList>
            <person name="Engel S.R."/>
            <person name="Dietrich F.S."/>
            <person name="Fisk D.G."/>
            <person name="Binkley G."/>
            <person name="Balakrishnan R."/>
            <person name="Costanzo M.C."/>
            <person name="Dwight S.S."/>
            <person name="Hitz B.C."/>
            <person name="Karra K."/>
            <person name="Nash R.S."/>
            <person name="Weng S."/>
            <person name="Wong E.D."/>
            <person name="Lloyd P."/>
            <person name="Skrzypek M.S."/>
            <person name="Miyasato S.R."/>
            <person name="Simison M."/>
            <person name="Cherry J.M."/>
        </authorList>
    </citation>
    <scope>GENOME REANNOTATION</scope>
    <source>
        <strain>ATCC 204508 / S288c</strain>
    </source>
</reference>
<reference key="3">
    <citation type="journal article" date="2002" name="Nat. Biotechnol.">
        <title>An integrated approach for finding overlooked genes in yeast.</title>
        <authorList>
            <person name="Kumar A."/>
            <person name="Harrison P.M."/>
            <person name="Cheung K.-H."/>
            <person name="Lan N."/>
            <person name="Echols N."/>
            <person name="Bertone P."/>
            <person name="Miller P."/>
            <person name="Gerstein M.B."/>
            <person name="Snyder M."/>
        </authorList>
    </citation>
    <scope>NUCLEOTIDE SEQUENCE [GENOMIC DNA]</scope>
</reference>
<protein>
    <recommendedName>
        <fullName>Putative uncharacterized protein YDR354C-A</fullName>
    </recommendedName>
</protein>
<dbReference type="EMBL" id="U28372">
    <property type="status" value="NOT_ANNOTATED_CDS"/>
    <property type="molecule type" value="Genomic_DNA"/>
</dbReference>
<dbReference type="EMBL" id="AF479942">
    <property type="protein sequence ID" value="AAL79255.1"/>
    <property type="molecule type" value="Genomic_DNA"/>
</dbReference>
<dbReference type="STRING" id="4932.YDR354C-A"/>
<dbReference type="PaxDb" id="4932-YDR354C-A"/>
<dbReference type="EnsemblFungi" id="YDR354C-A_mRNA">
    <property type="protein sequence ID" value="YDR354C-A"/>
    <property type="gene ID" value="YDR354C-A"/>
</dbReference>
<dbReference type="AGR" id="SGD:S000028613"/>
<dbReference type="SGD" id="S000028613">
    <property type="gene designation" value="YDR354C-A"/>
</dbReference>
<dbReference type="HOGENOM" id="CLU_3175728_0_0_1"/>
<accession>Q8TGP6</accession>